<protein>
    <recommendedName>
        <fullName>Diphthamide biosynthesis protein 3</fullName>
    </recommendedName>
</protein>
<proteinExistence type="inferred from homology"/>
<keyword id="KW-0963">Cytoplasm</keyword>
<keyword id="KW-0408">Iron</keyword>
<keyword id="KW-0479">Metal-binding</keyword>
<keyword id="KW-0539">Nucleus</keyword>
<keyword id="KW-0560">Oxidoreductase</keyword>
<keyword id="KW-1185">Reference proteome</keyword>
<feature type="chain" id="PRO_0000082631" description="Diphthamide biosynthesis protein 3">
    <location>
        <begin position="1"/>
        <end position="83"/>
    </location>
</feature>
<feature type="domain" description="DPH-type MB" evidence="3">
    <location>
        <begin position="8"/>
        <end position="64"/>
    </location>
</feature>
<feature type="binding site" evidence="2">
    <location>
        <position position="30"/>
    </location>
    <ligand>
        <name>Fe cation</name>
        <dbReference type="ChEBI" id="CHEBI:24875"/>
    </ligand>
</feature>
<feature type="binding site" evidence="2">
    <location>
        <position position="32"/>
    </location>
    <ligand>
        <name>Fe cation</name>
        <dbReference type="ChEBI" id="CHEBI:24875"/>
    </ligand>
</feature>
<feature type="binding site" evidence="2">
    <location>
        <position position="52"/>
    </location>
    <ligand>
        <name>Fe cation</name>
        <dbReference type="ChEBI" id="CHEBI:24875"/>
    </ligand>
</feature>
<feature type="binding site" evidence="2">
    <location>
        <position position="55"/>
    </location>
    <ligand>
        <name>Fe cation</name>
        <dbReference type="ChEBI" id="CHEBI:24875"/>
    </ligand>
</feature>
<gene>
    <name type="primary">dph3</name>
    <name type="ORF">AN10248</name>
</gene>
<sequence length="83" mass="9426">MADEALSIYDEIEIEDMTFDANLQIYHYPCPCGDRFEIAIDDLRYGEDIAVCPSCSLMIKVIFDQSDLPKEEKKETEGVSVKA</sequence>
<comment type="function">
    <text evidence="2">Required for the first step of diphthamide biosynthesis, a post-translational modification of histidine which occurs in elongation factor 2. Dph1 and dph2 transfer a 3-amino-3-carboxypropyl (ACP) group from S-adenosyl-L-methionine (SAM) to a histidine residue, the reaction is assisted by a reduction system comprising dph3 and a NADH-dependent reductase, predominantly cbr1. Acts as an electron donor to reduce the Fe-S cluster in dph1-dph2 keeping the [4Fe-4S] clusters in the active and reduced state. Restores iron to dph1-dph2 iron-sulfur clusters which have degraded from [4Fe-4S] to [3Fe-4S] by donating an iron atom to reform [4Fe-4S] clusters, in a manner dependent on the presence of elongation factor 2 and SAM. Associates with the elongator complex and is required for tRNA Wobble base modifications mediated by the elongator complex. The elongator complex is required for multiple tRNA modifications, including mcm5U (5-methoxycarbonylmethyl uridine), mcm5s 2U (5-methoxycarbonylmethyl-2-thiouridine), and ncm5U (5-carbamoylmethyl uridine).</text>
</comment>
<comment type="catalytic activity">
    <reaction evidence="2">
        <text>[3Fe-4S](1+)-[protein] + Fe(2+)-[Dph3] = [3Fe-4S](0)-[protein] + Fe(3+)-[Dph3]</text>
        <dbReference type="Rhea" id="RHEA:71235"/>
        <dbReference type="Rhea" id="RHEA-COMP:17996"/>
        <dbReference type="Rhea" id="RHEA-COMP:17997"/>
        <dbReference type="Rhea" id="RHEA-COMP:18002"/>
        <dbReference type="Rhea" id="RHEA-COMP:18003"/>
        <dbReference type="ChEBI" id="CHEBI:29033"/>
        <dbReference type="ChEBI" id="CHEBI:29034"/>
        <dbReference type="ChEBI" id="CHEBI:33751"/>
        <dbReference type="ChEBI" id="CHEBI:47402"/>
        <dbReference type="ChEBI" id="CHEBI:83228"/>
    </reaction>
</comment>
<comment type="catalytic activity">
    <reaction evidence="2">
        <text>2 [3Fe-4S](0)-[protein] + 2 Fe(2+)-[Dph3] + NADH = 2 [4Fe-4S](1+)-[protein] + 2 [Dph3] + NAD(+) + H(+)</text>
        <dbReference type="Rhea" id="RHEA:71239"/>
        <dbReference type="Rhea" id="RHEA-COMP:17997"/>
        <dbReference type="Rhea" id="RHEA-COMP:17998"/>
        <dbReference type="Rhea" id="RHEA-COMP:18001"/>
        <dbReference type="Rhea" id="RHEA-COMP:18002"/>
        <dbReference type="ChEBI" id="CHEBI:15378"/>
        <dbReference type="ChEBI" id="CHEBI:29033"/>
        <dbReference type="ChEBI" id="CHEBI:33723"/>
        <dbReference type="ChEBI" id="CHEBI:47402"/>
        <dbReference type="ChEBI" id="CHEBI:57540"/>
        <dbReference type="ChEBI" id="CHEBI:57945"/>
        <dbReference type="ChEBI" id="CHEBI:83228"/>
    </reaction>
</comment>
<comment type="cofactor">
    <cofactor evidence="2">
        <name>Fe(2+)</name>
        <dbReference type="ChEBI" id="CHEBI:29033"/>
    </cofactor>
</comment>
<comment type="pathway">
    <text evidence="2">Protein modification; peptidyl-diphthamide biosynthesis.</text>
</comment>
<comment type="subunit">
    <text evidence="2">Component of the 2-(3-amino-3-carboxypropyl)histidine synthase complex composed of dph1, dph2, dph3 and a NADH-dependent reductase, predominantly cbr1.</text>
</comment>
<comment type="subcellular location">
    <subcellularLocation>
        <location evidence="1">Cytoplasm</location>
    </subcellularLocation>
    <subcellularLocation>
        <location evidence="1">Nucleus</location>
    </subcellularLocation>
</comment>
<comment type="domain">
    <text evidence="2">The DPH-type metal-binding (MB) domain can also bind zinc. However, iron is the physiological binding partner as zinc binding impairs the protein electron donor function.</text>
</comment>
<comment type="similarity">
    <text evidence="4">Belongs to the DPH3 family.</text>
</comment>
<comment type="sequence caution" evidence="4">
    <conflict type="erroneous initiation">
        <sequence resource="EMBL-CDS" id="CBF85953"/>
    </conflict>
    <text>Extended N-terminus.</text>
</comment>
<comment type="sequence caution" evidence="4">
    <conflict type="erroneous gene model prediction">
        <sequence resource="EMBL-CDS" id="EAA63886"/>
    </conflict>
    <text>The predicted gene AN1985 has been split into 2 genes: AN10248 and AN10254.</text>
</comment>
<name>DPH3_EMENI</name>
<organism>
    <name type="scientific">Emericella nidulans (strain FGSC A4 / ATCC 38163 / CBS 112.46 / NRRL 194 / M139)</name>
    <name type="common">Aspergillus nidulans</name>
    <dbReference type="NCBI Taxonomy" id="227321"/>
    <lineage>
        <taxon>Eukaryota</taxon>
        <taxon>Fungi</taxon>
        <taxon>Dikarya</taxon>
        <taxon>Ascomycota</taxon>
        <taxon>Pezizomycotina</taxon>
        <taxon>Eurotiomycetes</taxon>
        <taxon>Eurotiomycetidae</taxon>
        <taxon>Eurotiales</taxon>
        <taxon>Aspergillaceae</taxon>
        <taxon>Aspergillus</taxon>
        <taxon>Aspergillus subgen. Nidulantes</taxon>
    </lineage>
</organism>
<accession>P0C0V4</accession>
<accession>C8VL61</accession>
<accession>Q5BBU5</accession>
<dbReference type="EMBL" id="AACD01000030">
    <property type="protein sequence ID" value="EAA63886.1"/>
    <property type="status" value="ALT_SEQ"/>
    <property type="molecule type" value="Genomic_DNA"/>
</dbReference>
<dbReference type="EMBL" id="BN001307">
    <property type="protein sequence ID" value="CBF85953.1"/>
    <property type="status" value="ALT_INIT"/>
    <property type="molecule type" value="Genomic_DNA"/>
</dbReference>
<dbReference type="SMR" id="P0C0V4"/>
<dbReference type="FunCoup" id="P0C0V4">
    <property type="interactions" value="328"/>
</dbReference>
<dbReference type="STRING" id="227321.P0C0V4"/>
<dbReference type="eggNOG" id="KOG2923">
    <property type="taxonomic scope" value="Eukaryota"/>
</dbReference>
<dbReference type="HOGENOM" id="CLU_054584_1_0_1"/>
<dbReference type="InParanoid" id="P0C0V4"/>
<dbReference type="UniPathway" id="UPA00559"/>
<dbReference type="Proteomes" id="UP000000560">
    <property type="component" value="Chromosome VII"/>
</dbReference>
<dbReference type="GO" id="GO:0005737">
    <property type="term" value="C:cytoplasm"/>
    <property type="evidence" value="ECO:0007669"/>
    <property type="project" value="UniProtKB-SubCell"/>
</dbReference>
<dbReference type="GO" id="GO:0005634">
    <property type="term" value="C:nucleus"/>
    <property type="evidence" value="ECO:0007669"/>
    <property type="project" value="UniProtKB-SubCell"/>
</dbReference>
<dbReference type="GO" id="GO:0008198">
    <property type="term" value="F:ferrous iron binding"/>
    <property type="evidence" value="ECO:0000250"/>
    <property type="project" value="UniProtKB"/>
</dbReference>
<dbReference type="GO" id="GO:0034986">
    <property type="term" value="F:iron chaperone activity"/>
    <property type="evidence" value="ECO:0000250"/>
    <property type="project" value="UniProtKB"/>
</dbReference>
<dbReference type="GO" id="GO:0016491">
    <property type="term" value="F:oxidoreductase activity"/>
    <property type="evidence" value="ECO:0007669"/>
    <property type="project" value="UniProtKB-KW"/>
</dbReference>
<dbReference type="GO" id="GO:0017183">
    <property type="term" value="P:protein histidyl modification to diphthamide"/>
    <property type="evidence" value="ECO:0000250"/>
    <property type="project" value="UniProtKB"/>
</dbReference>
<dbReference type="GO" id="GO:0002926">
    <property type="term" value="P:tRNA wobble base 5-methoxycarbonylmethyl-2-thiouridinylation"/>
    <property type="evidence" value="ECO:0000250"/>
    <property type="project" value="UniProtKB"/>
</dbReference>
<dbReference type="FunFam" id="3.10.660.10:FF:000001">
    <property type="entry name" value="Diphthamide biosynthesis 3"/>
    <property type="match status" value="1"/>
</dbReference>
<dbReference type="Gene3D" id="3.10.660.10">
    <property type="entry name" value="DPH Zinc finger"/>
    <property type="match status" value="1"/>
</dbReference>
<dbReference type="InterPro" id="IPR044248">
    <property type="entry name" value="DPH3/4-like"/>
</dbReference>
<dbReference type="InterPro" id="IPR007872">
    <property type="entry name" value="DPH_MB_dom"/>
</dbReference>
<dbReference type="InterPro" id="IPR036671">
    <property type="entry name" value="DPH_MB_sf"/>
</dbReference>
<dbReference type="PANTHER" id="PTHR21454:SF31">
    <property type="entry name" value="DIPHTHAMIDE BIOSYNTHESIS PROTEIN 3"/>
    <property type="match status" value="1"/>
</dbReference>
<dbReference type="PANTHER" id="PTHR21454">
    <property type="entry name" value="DPH3 HOMOLOG-RELATED"/>
    <property type="match status" value="1"/>
</dbReference>
<dbReference type="Pfam" id="PF05207">
    <property type="entry name" value="Zn_ribbon_CSL"/>
    <property type="match status" value="1"/>
</dbReference>
<dbReference type="SUPFAM" id="SSF144217">
    <property type="entry name" value="CSL zinc finger"/>
    <property type="match status" value="1"/>
</dbReference>
<dbReference type="PROSITE" id="PS51074">
    <property type="entry name" value="DPH_MB"/>
    <property type="match status" value="1"/>
</dbReference>
<evidence type="ECO:0000250" key="1"/>
<evidence type="ECO:0000250" key="2">
    <source>
        <dbReference type="UniProtKB" id="Q3E840"/>
    </source>
</evidence>
<evidence type="ECO:0000255" key="3">
    <source>
        <dbReference type="PROSITE-ProRule" id="PRU00456"/>
    </source>
</evidence>
<evidence type="ECO:0000305" key="4"/>
<reference key="1">
    <citation type="journal article" date="2005" name="Nature">
        <title>Sequencing of Aspergillus nidulans and comparative analysis with A. fumigatus and A. oryzae.</title>
        <authorList>
            <person name="Galagan J.E."/>
            <person name="Calvo S.E."/>
            <person name="Cuomo C."/>
            <person name="Ma L.-J."/>
            <person name="Wortman J.R."/>
            <person name="Batzoglou S."/>
            <person name="Lee S.-I."/>
            <person name="Bastuerkmen M."/>
            <person name="Spevak C.C."/>
            <person name="Clutterbuck J."/>
            <person name="Kapitonov V."/>
            <person name="Jurka J."/>
            <person name="Scazzocchio C."/>
            <person name="Farman M.L."/>
            <person name="Butler J."/>
            <person name="Purcell S."/>
            <person name="Harris S."/>
            <person name="Braus G.H."/>
            <person name="Draht O."/>
            <person name="Busch S."/>
            <person name="D'Enfert C."/>
            <person name="Bouchier C."/>
            <person name="Goldman G.H."/>
            <person name="Bell-Pedersen D."/>
            <person name="Griffiths-Jones S."/>
            <person name="Doonan J.H."/>
            <person name="Yu J."/>
            <person name="Vienken K."/>
            <person name="Pain A."/>
            <person name="Freitag M."/>
            <person name="Selker E.U."/>
            <person name="Archer D.B."/>
            <person name="Penalva M.A."/>
            <person name="Oakley B.R."/>
            <person name="Momany M."/>
            <person name="Tanaka T."/>
            <person name="Kumagai T."/>
            <person name="Asai K."/>
            <person name="Machida M."/>
            <person name="Nierman W.C."/>
            <person name="Denning D.W."/>
            <person name="Caddick M.X."/>
            <person name="Hynes M."/>
            <person name="Paoletti M."/>
            <person name="Fischer R."/>
            <person name="Miller B.L."/>
            <person name="Dyer P.S."/>
            <person name="Sachs M.S."/>
            <person name="Osmani S.A."/>
            <person name="Birren B.W."/>
        </authorList>
    </citation>
    <scope>NUCLEOTIDE SEQUENCE [LARGE SCALE GENOMIC DNA]</scope>
    <source>
        <strain>FGSC A4 / ATCC 38163 / CBS 112.46 / NRRL 194 / M139</strain>
    </source>
</reference>
<reference key="2">
    <citation type="journal article" date="2009" name="Fungal Genet. Biol.">
        <title>The 2008 update of the Aspergillus nidulans genome annotation: a community effort.</title>
        <authorList>
            <person name="Wortman J.R."/>
            <person name="Gilsenan J.M."/>
            <person name="Joardar V."/>
            <person name="Deegan J."/>
            <person name="Clutterbuck J."/>
            <person name="Andersen M.R."/>
            <person name="Archer D."/>
            <person name="Bencina M."/>
            <person name="Braus G."/>
            <person name="Coutinho P."/>
            <person name="von Dohren H."/>
            <person name="Doonan J."/>
            <person name="Driessen A.J."/>
            <person name="Durek P."/>
            <person name="Espeso E."/>
            <person name="Fekete E."/>
            <person name="Flipphi M."/>
            <person name="Estrada C.G."/>
            <person name="Geysens S."/>
            <person name="Goldman G."/>
            <person name="de Groot P.W."/>
            <person name="Hansen K."/>
            <person name="Harris S.D."/>
            <person name="Heinekamp T."/>
            <person name="Helmstaedt K."/>
            <person name="Henrissat B."/>
            <person name="Hofmann G."/>
            <person name="Homan T."/>
            <person name="Horio T."/>
            <person name="Horiuchi H."/>
            <person name="James S."/>
            <person name="Jones M."/>
            <person name="Karaffa L."/>
            <person name="Karanyi Z."/>
            <person name="Kato M."/>
            <person name="Keller N."/>
            <person name="Kelly D.E."/>
            <person name="Kiel J.A."/>
            <person name="Kim J.M."/>
            <person name="van der Klei I.J."/>
            <person name="Klis F.M."/>
            <person name="Kovalchuk A."/>
            <person name="Krasevec N."/>
            <person name="Kubicek C.P."/>
            <person name="Liu B."/>
            <person name="Maccabe A."/>
            <person name="Meyer V."/>
            <person name="Mirabito P."/>
            <person name="Miskei M."/>
            <person name="Mos M."/>
            <person name="Mullins J."/>
            <person name="Nelson D.R."/>
            <person name="Nielsen J."/>
            <person name="Oakley B.R."/>
            <person name="Osmani S.A."/>
            <person name="Pakula T."/>
            <person name="Paszewski A."/>
            <person name="Paulsen I."/>
            <person name="Pilsyk S."/>
            <person name="Pocsi I."/>
            <person name="Punt P.J."/>
            <person name="Ram A.F."/>
            <person name="Ren Q."/>
            <person name="Robellet X."/>
            <person name="Robson G."/>
            <person name="Seiboth B."/>
            <person name="van Solingen P."/>
            <person name="Specht T."/>
            <person name="Sun J."/>
            <person name="Taheri-Talesh N."/>
            <person name="Takeshita N."/>
            <person name="Ussery D."/>
            <person name="vanKuyk P.A."/>
            <person name="Visser H."/>
            <person name="van de Vondervoort P.J."/>
            <person name="de Vries R.P."/>
            <person name="Walton J."/>
            <person name="Xiang X."/>
            <person name="Xiong Y."/>
            <person name="Zeng A.P."/>
            <person name="Brandt B.W."/>
            <person name="Cornell M.J."/>
            <person name="van den Hondel C.A."/>
            <person name="Visser J."/>
            <person name="Oliver S.G."/>
            <person name="Turner G."/>
        </authorList>
    </citation>
    <scope>GENOME REANNOTATION</scope>
    <source>
        <strain>FGSC A4 / ATCC 38163 / CBS 112.46 / NRRL 194 / M139</strain>
    </source>
</reference>